<feature type="chain" id="PRO_1000138072" description="tRNA-modifying protein YgfZ">
    <location>
        <begin position="1"/>
        <end position="326"/>
    </location>
</feature>
<feature type="binding site" evidence="1">
    <location>
        <position position="27"/>
    </location>
    <ligand>
        <name>folate</name>
        <dbReference type="ChEBI" id="CHEBI:62501"/>
    </ligand>
</feature>
<feature type="binding site" evidence="1">
    <location>
        <position position="189"/>
    </location>
    <ligand>
        <name>folate</name>
        <dbReference type="ChEBI" id="CHEBI:62501"/>
    </ligand>
</feature>
<gene>
    <name evidence="1" type="primary">ygfZ</name>
    <name type="ordered locus">ECIAI1_3017</name>
</gene>
<accession>B7LYG2</accession>
<sequence>MAFTPFPPRQPTASARLPLTLMTLDDWALATITGADSEKYMQGQVTADVSQMAEDQHLLAAHCDAKGKMWSNLRLFRDGDGFAWIERRSVREPQLTELKKYAVFSKVTIAPDDERVLLGVAGFQARAALANLFSELPSKEKQVVKEGATTLLWFEHPAERFLIVTDEATANMLTDKLRGEAELNNSQQWLALNIEAGFPVIDAANSGQFIPQATNLQALGGISFKKGCYTGQEMVARAKFRGANKRALWLLAGSASRLPEAGEDLELKMGENWRRTGTVLAAVKLEDGQVVVQVVMNNDMEPDSIFRVRDDANTLHIEPLPYSLEE</sequence>
<organism>
    <name type="scientific">Escherichia coli O8 (strain IAI1)</name>
    <dbReference type="NCBI Taxonomy" id="585034"/>
    <lineage>
        <taxon>Bacteria</taxon>
        <taxon>Pseudomonadati</taxon>
        <taxon>Pseudomonadota</taxon>
        <taxon>Gammaproteobacteria</taxon>
        <taxon>Enterobacterales</taxon>
        <taxon>Enterobacteriaceae</taxon>
        <taxon>Escherichia</taxon>
    </lineage>
</organism>
<protein>
    <recommendedName>
        <fullName evidence="1">tRNA-modifying protein YgfZ</fullName>
    </recommendedName>
</protein>
<keyword id="KW-0963">Cytoplasm</keyword>
<keyword id="KW-0290">Folate-binding</keyword>
<keyword id="KW-0819">tRNA processing</keyword>
<comment type="function">
    <text evidence="1">Folate-binding protein involved in regulating the level of ATP-DnaA and in the modification of some tRNAs. It is probably a key factor in regulatory networks that act via tRNA modification, such as initiation of chromosomal replication.</text>
</comment>
<comment type="subcellular location">
    <subcellularLocation>
        <location evidence="1">Cytoplasm</location>
    </subcellularLocation>
</comment>
<comment type="similarity">
    <text evidence="1">Belongs to the tRNA-modifying YgfZ family.</text>
</comment>
<name>YGFZ_ECO8A</name>
<proteinExistence type="inferred from homology"/>
<dbReference type="EMBL" id="CU928160">
    <property type="protein sequence ID" value="CAQ99832.1"/>
    <property type="molecule type" value="Genomic_DNA"/>
</dbReference>
<dbReference type="RefSeq" id="WP_000886062.1">
    <property type="nucleotide sequence ID" value="NC_011741.1"/>
</dbReference>
<dbReference type="SMR" id="B7LYG2"/>
<dbReference type="GeneID" id="75205265"/>
<dbReference type="KEGG" id="ecr:ECIAI1_3017"/>
<dbReference type="HOGENOM" id="CLU_007884_6_1_6"/>
<dbReference type="GO" id="GO:0005737">
    <property type="term" value="C:cytoplasm"/>
    <property type="evidence" value="ECO:0007669"/>
    <property type="project" value="UniProtKB-SubCell"/>
</dbReference>
<dbReference type="GO" id="GO:0005542">
    <property type="term" value="F:folic acid binding"/>
    <property type="evidence" value="ECO:0007669"/>
    <property type="project" value="UniProtKB-UniRule"/>
</dbReference>
<dbReference type="GO" id="GO:0016226">
    <property type="term" value="P:iron-sulfur cluster assembly"/>
    <property type="evidence" value="ECO:0007669"/>
    <property type="project" value="TreeGrafter"/>
</dbReference>
<dbReference type="GO" id="GO:0009451">
    <property type="term" value="P:RNA modification"/>
    <property type="evidence" value="ECO:0007669"/>
    <property type="project" value="InterPro"/>
</dbReference>
<dbReference type="GO" id="GO:0008033">
    <property type="term" value="P:tRNA processing"/>
    <property type="evidence" value="ECO:0007669"/>
    <property type="project" value="UniProtKB-UniRule"/>
</dbReference>
<dbReference type="FunFam" id="2.40.30.160:FF:000001">
    <property type="entry name" value="tRNA-modifying protein YgfZ"/>
    <property type="match status" value="1"/>
</dbReference>
<dbReference type="FunFam" id="3.30.70.1400:FF:000002">
    <property type="entry name" value="tRNA-modifying protein YgfZ"/>
    <property type="match status" value="1"/>
</dbReference>
<dbReference type="FunFam" id="3.30.70.1630:FF:000001">
    <property type="entry name" value="tRNA-modifying protein YgfZ"/>
    <property type="match status" value="1"/>
</dbReference>
<dbReference type="Gene3D" id="2.40.30.160">
    <property type="match status" value="1"/>
</dbReference>
<dbReference type="Gene3D" id="3.30.70.1630">
    <property type="match status" value="1"/>
</dbReference>
<dbReference type="Gene3D" id="3.30.70.1400">
    <property type="entry name" value="Aminomethyltransferase beta-barrel domains"/>
    <property type="match status" value="1"/>
</dbReference>
<dbReference type="HAMAP" id="MF_01175">
    <property type="entry name" value="tRNA_modifying_YgfZ"/>
    <property type="match status" value="1"/>
</dbReference>
<dbReference type="InterPro" id="IPR006222">
    <property type="entry name" value="GCV_T_N"/>
</dbReference>
<dbReference type="InterPro" id="IPR029043">
    <property type="entry name" value="GcvT/YgfZ_C"/>
</dbReference>
<dbReference type="InterPro" id="IPR023758">
    <property type="entry name" value="tRNA-modifying_YgfZ"/>
</dbReference>
<dbReference type="InterPro" id="IPR045179">
    <property type="entry name" value="YgfZ/GcvT"/>
</dbReference>
<dbReference type="InterPro" id="IPR017703">
    <property type="entry name" value="YgfZ/GcvT_CS"/>
</dbReference>
<dbReference type="InterPro" id="IPR048451">
    <property type="entry name" value="YgfZ_barrel"/>
</dbReference>
<dbReference type="NCBIfam" id="NF007110">
    <property type="entry name" value="PRK09559.1"/>
    <property type="match status" value="1"/>
</dbReference>
<dbReference type="NCBIfam" id="TIGR03317">
    <property type="entry name" value="ygfZ_signature"/>
    <property type="match status" value="1"/>
</dbReference>
<dbReference type="PANTHER" id="PTHR22602">
    <property type="entry name" value="TRANSFERASE CAF17, MITOCHONDRIAL-RELATED"/>
    <property type="match status" value="1"/>
</dbReference>
<dbReference type="PANTHER" id="PTHR22602:SF0">
    <property type="entry name" value="TRANSFERASE CAF17, MITOCHONDRIAL-RELATED"/>
    <property type="match status" value="1"/>
</dbReference>
<dbReference type="Pfam" id="PF01571">
    <property type="entry name" value="GCV_T"/>
    <property type="match status" value="1"/>
</dbReference>
<dbReference type="Pfam" id="PF21130">
    <property type="entry name" value="YgfZ_barrel"/>
    <property type="match status" value="1"/>
</dbReference>
<dbReference type="SUPFAM" id="SSF101790">
    <property type="entry name" value="Aminomethyltransferase beta-barrel domain"/>
    <property type="match status" value="1"/>
</dbReference>
<dbReference type="SUPFAM" id="SSF103025">
    <property type="entry name" value="Folate-binding domain"/>
    <property type="match status" value="1"/>
</dbReference>
<reference key="1">
    <citation type="journal article" date="2009" name="PLoS Genet.">
        <title>Organised genome dynamics in the Escherichia coli species results in highly diverse adaptive paths.</title>
        <authorList>
            <person name="Touchon M."/>
            <person name="Hoede C."/>
            <person name="Tenaillon O."/>
            <person name="Barbe V."/>
            <person name="Baeriswyl S."/>
            <person name="Bidet P."/>
            <person name="Bingen E."/>
            <person name="Bonacorsi S."/>
            <person name="Bouchier C."/>
            <person name="Bouvet O."/>
            <person name="Calteau A."/>
            <person name="Chiapello H."/>
            <person name="Clermont O."/>
            <person name="Cruveiller S."/>
            <person name="Danchin A."/>
            <person name="Diard M."/>
            <person name="Dossat C."/>
            <person name="Karoui M.E."/>
            <person name="Frapy E."/>
            <person name="Garry L."/>
            <person name="Ghigo J.M."/>
            <person name="Gilles A.M."/>
            <person name="Johnson J."/>
            <person name="Le Bouguenec C."/>
            <person name="Lescat M."/>
            <person name="Mangenot S."/>
            <person name="Martinez-Jehanne V."/>
            <person name="Matic I."/>
            <person name="Nassif X."/>
            <person name="Oztas S."/>
            <person name="Petit M.A."/>
            <person name="Pichon C."/>
            <person name="Rouy Z."/>
            <person name="Ruf C.S."/>
            <person name="Schneider D."/>
            <person name="Tourret J."/>
            <person name="Vacherie B."/>
            <person name="Vallenet D."/>
            <person name="Medigue C."/>
            <person name="Rocha E.P.C."/>
            <person name="Denamur E."/>
        </authorList>
    </citation>
    <scope>NUCLEOTIDE SEQUENCE [LARGE SCALE GENOMIC DNA]</scope>
    <source>
        <strain>IAI1</strain>
    </source>
</reference>
<evidence type="ECO:0000255" key="1">
    <source>
        <dbReference type="HAMAP-Rule" id="MF_01175"/>
    </source>
</evidence>